<sequence length="141" mass="14976">MAKKVIKMVKLQIPAGKANPAPPVGPALGQAGVNIMGFCKEFNARTADQAGLIIPVEITVFEDRSFTFITKTPPAAVLLKKVAGIESGSGEPNRNKVATVKRDKVREIAETKMPDLNAASVEAAMRMVEGTARSMGIVIED</sequence>
<keyword id="KW-0488">Methylation</keyword>
<keyword id="KW-1185">Reference proteome</keyword>
<keyword id="KW-0687">Ribonucleoprotein</keyword>
<keyword id="KW-0689">Ribosomal protein</keyword>
<keyword id="KW-0694">RNA-binding</keyword>
<keyword id="KW-0699">rRNA-binding</keyword>
<proteinExistence type="inferred from homology"/>
<name>RL11_BACAN</name>
<protein>
    <recommendedName>
        <fullName evidence="1">Large ribosomal subunit protein uL11</fullName>
    </recommendedName>
    <alternativeName>
        <fullName evidence="2">50S ribosomal protein L11</fullName>
    </alternativeName>
</protein>
<accession>Q81VU3</accession>
<accession>Q6I4U7</accession>
<accession>Q6KYJ2</accession>
<reference key="1">
    <citation type="journal article" date="2003" name="Nature">
        <title>The genome sequence of Bacillus anthracis Ames and comparison to closely related bacteria.</title>
        <authorList>
            <person name="Read T.D."/>
            <person name="Peterson S.N."/>
            <person name="Tourasse N.J."/>
            <person name="Baillie L.W."/>
            <person name="Paulsen I.T."/>
            <person name="Nelson K.E."/>
            <person name="Tettelin H."/>
            <person name="Fouts D.E."/>
            <person name="Eisen J.A."/>
            <person name="Gill S.R."/>
            <person name="Holtzapple E.K."/>
            <person name="Okstad O.A."/>
            <person name="Helgason E."/>
            <person name="Rilstone J."/>
            <person name="Wu M."/>
            <person name="Kolonay J.F."/>
            <person name="Beanan M.J."/>
            <person name="Dodson R.J."/>
            <person name="Brinkac L.M."/>
            <person name="Gwinn M.L."/>
            <person name="DeBoy R.T."/>
            <person name="Madpu R."/>
            <person name="Daugherty S.C."/>
            <person name="Durkin A.S."/>
            <person name="Haft D.H."/>
            <person name="Nelson W.C."/>
            <person name="Peterson J.D."/>
            <person name="Pop M."/>
            <person name="Khouri H.M."/>
            <person name="Radune D."/>
            <person name="Benton J.L."/>
            <person name="Mahamoud Y."/>
            <person name="Jiang L."/>
            <person name="Hance I.R."/>
            <person name="Weidman J.F."/>
            <person name="Berry K.J."/>
            <person name="Plaut R.D."/>
            <person name="Wolf A.M."/>
            <person name="Watkins K.L."/>
            <person name="Nierman W.C."/>
            <person name="Hazen A."/>
            <person name="Cline R.T."/>
            <person name="Redmond C."/>
            <person name="Thwaite J.E."/>
            <person name="White O."/>
            <person name="Salzberg S.L."/>
            <person name="Thomason B."/>
            <person name="Friedlander A.M."/>
            <person name="Koehler T.M."/>
            <person name="Hanna P.C."/>
            <person name="Kolstoe A.-B."/>
            <person name="Fraser C.M."/>
        </authorList>
    </citation>
    <scope>NUCLEOTIDE SEQUENCE [LARGE SCALE GENOMIC DNA]</scope>
    <source>
        <strain>Ames / isolate Porton</strain>
    </source>
</reference>
<reference key="2">
    <citation type="journal article" date="2009" name="J. Bacteriol.">
        <title>The complete genome sequence of Bacillus anthracis Ames 'Ancestor'.</title>
        <authorList>
            <person name="Ravel J."/>
            <person name="Jiang L."/>
            <person name="Stanley S.T."/>
            <person name="Wilson M.R."/>
            <person name="Decker R.S."/>
            <person name="Read T.D."/>
            <person name="Worsham P."/>
            <person name="Keim P.S."/>
            <person name="Salzberg S.L."/>
            <person name="Fraser-Liggett C.M."/>
            <person name="Rasko D.A."/>
        </authorList>
    </citation>
    <scope>NUCLEOTIDE SEQUENCE [LARGE SCALE GENOMIC DNA]</scope>
    <source>
        <strain>Ames ancestor</strain>
    </source>
</reference>
<reference key="3">
    <citation type="submission" date="2004-01" db="EMBL/GenBank/DDBJ databases">
        <title>Complete genome sequence of Bacillus anthracis Sterne.</title>
        <authorList>
            <person name="Brettin T.S."/>
            <person name="Bruce D."/>
            <person name="Challacombe J.F."/>
            <person name="Gilna P."/>
            <person name="Han C."/>
            <person name="Hill K."/>
            <person name="Hitchcock P."/>
            <person name="Jackson P."/>
            <person name="Keim P."/>
            <person name="Longmire J."/>
            <person name="Lucas S."/>
            <person name="Okinaka R."/>
            <person name="Richardson P."/>
            <person name="Rubin E."/>
            <person name="Tice H."/>
        </authorList>
    </citation>
    <scope>NUCLEOTIDE SEQUENCE [LARGE SCALE GENOMIC DNA]</scope>
    <source>
        <strain>Sterne</strain>
    </source>
</reference>
<dbReference type="EMBL" id="AE016879">
    <property type="protein sequence ID" value="AAP24151.1"/>
    <property type="molecule type" value="Genomic_DNA"/>
</dbReference>
<dbReference type="EMBL" id="AE017334">
    <property type="protein sequence ID" value="AAT29175.2"/>
    <property type="molecule type" value="Genomic_DNA"/>
</dbReference>
<dbReference type="EMBL" id="AE017225">
    <property type="protein sequence ID" value="AAT52434.1"/>
    <property type="molecule type" value="Genomic_DNA"/>
</dbReference>
<dbReference type="RefSeq" id="NP_842665.1">
    <property type="nucleotide sequence ID" value="NC_003997.3"/>
</dbReference>
<dbReference type="RefSeq" id="WP_001085872.1">
    <property type="nucleotide sequence ID" value="NZ_WXXJ01000051.1"/>
</dbReference>
<dbReference type="RefSeq" id="YP_026383.1">
    <property type="nucleotide sequence ID" value="NC_005945.1"/>
</dbReference>
<dbReference type="SMR" id="Q81VU3"/>
<dbReference type="STRING" id="261594.GBAA_0097"/>
<dbReference type="DNASU" id="1086044"/>
<dbReference type="GeneID" id="93010956"/>
<dbReference type="KEGG" id="ban:BA_0097"/>
<dbReference type="KEGG" id="bar:GBAA_0097"/>
<dbReference type="KEGG" id="bat:BAS0097"/>
<dbReference type="PATRIC" id="fig|198094.11.peg.94"/>
<dbReference type="eggNOG" id="COG0080">
    <property type="taxonomic scope" value="Bacteria"/>
</dbReference>
<dbReference type="HOGENOM" id="CLU_074237_2_1_9"/>
<dbReference type="OMA" id="CKQFNAK"/>
<dbReference type="OrthoDB" id="9802408at2"/>
<dbReference type="Proteomes" id="UP000000427">
    <property type="component" value="Chromosome"/>
</dbReference>
<dbReference type="Proteomes" id="UP000000594">
    <property type="component" value="Chromosome"/>
</dbReference>
<dbReference type="GO" id="GO:0022625">
    <property type="term" value="C:cytosolic large ribosomal subunit"/>
    <property type="evidence" value="ECO:0007669"/>
    <property type="project" value="TreeGrafter"/>
</dbReference>
<dbReference type="GO" id="GO:0070180">
    <property type="term" value="F:large ribosomal subunit rRNA binding"/>
    <property type="evidence" value="ECO:0007669"/>
    <property type="project" value="UniProtKB-UniRule"/>
</dbReference>
<dbReference type="GO" id="GO:0003735">
    <property type="term" value="F:structural constituent of ribosome"/>
    <property type="evidence" value="ECO:0007669"/>
    <property type="project" value="InterPro"/>
</dbReference>
<dbReference type="GO" id="GO:0006412">
    <property type="term" value="P:translation"/>
    <property type="evidence" value="ECO:0007669"/>
    <property type="project" value="UniProtKB-UniRule"/>
</dbReference>
<dbReference type="CDD" id="cd00349">
    <property type="entry name" value="Ribosomal_L11"/>
    <property type="match status" value="1"/>
</dbReference>
<dbReference type="FunFam" id="1.10.10.250:FF:000001">
    <property type="entry name" value="50S ribosomal protein L11"/>
    <property type="match status" value="1"/>
</dbReference>
<dbReference type="FunFam" id="3.30.1550.10:FF:000001">
    <property type="entry name" value="50S ribosomal protein L11"/>
    <property type="match status" value="1"/>
</dbReference>
<dbReference type="Gene3D" id="1.10.10.250">
    <property type="entry name" value="Ribosomal protein L11, C-terminal domain"/>
    <property type="match status" value="1"/>
</dbReference>
<dbReference type="Gene3D" id="3.30.1550.10">
    <property type="entry name" value="Ribosomal protein L11/L12, N-terminal domain"/>
    <property type="match status" value="1"/>
</dbReference>
<dbReference type="HAMAP" id="MF_00736">
    <property type="entry name" value="Ribosomal_uL11"/>
    <property type="match status" value="1"/>
</dbReference>
<dbReference type="InterPro" id="IPR000911">
    <property type="entry name" value="Ribosomal_uL11"/>
</dbReference>
<dbReference type="InterPro" id="IPR006519">
    <property type="entry name" value="Ribosomal_uL11_bac-typ"/>
</dbReference>
<dbReference type="InterPro" id="IPR020783">
    <property type="entry name" value="Ribosomal_uL11_C"/>
</dbReference>
<dbReference type="InterPro" id="IPR036769">
    <property type="entry name" value="Ribosomal_uL11_C_sf"/>
</dbReference>
<dbReference type="InterPro" id="IPR020785">
    <property type="entry name" value="Ribosomal_uL11_CS"/>
</dbReference>
<dbReference type="InterPro" id="IPR020784">
    <property type="entry name" value="Ribosomal_uL11_N"/>
</dbReference>
<dbReference type="InterPro" id="IPR036796">
    <property type="entry name" value="Ribosomal_uL11_N_sf"/>
</dbReference>
<dbReference type="NCBIfam" id="TIGR01632">
    <property type="entry name" value="L11_bact"/>
    <property type="match status" value="1"/>
</dbReference>
<dbReference type="PANTHER" id="PTHR11661">
    <property type="entry name" value="60S RIBOSOMAL PROTEIN L12"/>
    <property type="match status" value="1"/>
</dbReference>
<dbReference type="PANTHER" id="PTHR11661:SF1">
    <property type="entry name" value="LARGE RIBOSOMAL SUBUNIT PROTEIN UL11M"/>
    <property type="match status" value="1"/>
</dbReference>
<dbReference type="Pfam" id="PF00298">
    <property type="entry name" value="Ribosomal_L11"/>
    <property type="match status" value="1"/>
</dbReference>
<dbReference type="Pfam" id="PF03946">
    <property type="entry name" value="Ribosomal_L11_N"/>
    <property type="match status" value="1"/>
</dbReference>
<dbReference type="SMART" id="SM00649">
    <property type="entry name" value="RL11"/>
    <property type="match status" value="1"/>
</dbReference>
<dbReference type="SUPFAM" id="SSF54747">
    <property type="entry name" value="Ribosomal L11/L12e N-terminal domain"/>
    <property type="match status" value="1"/>
</dbReference>
<dbReference type="SUPFAM" id="SSF46906">
    <property type="entry name" value="Ribosomal protein L11, C-terminal domain"/>
    <property type="match status" value="1"/>
</dbReference>
<dbReference type="PROSITE" id="PS00359">
    <property type="entry name" value="RIBOSOMAL_L11"/>
    <property type="match status" value="1"/>
</dbReference>
<gene>
    <name evidence="1" type="primary">rplK</name>
    <name type="ordered locus">BA_0097</name>
    <name type="ordered locus">GBAA_0097</name>
    <name type="ordered locus">BAS0097</name>
</gene>
<organism>
    <name type="scientific">Bacillus anthracis</name>
    <dbReference type="NCBI Taxonomy" id="1392"/>
    <lineage>
        <taxon>Bacteria</taxon>
        <taxon>Bacillati</taxon>
        <taxon>Bacillota</taxon>
        <taxon>Bacilli</taxon>
        <taxon>Bacillales</taxon>
        <taxon>Bacillaceae</taxon>
        <taxon>Bacillus</taxon>
        <taxon>Bacillus cereus group</taxon>
    </lineage>
</organism>
<comment type="function">
    <text evidence="1">Forms part of the ribosomal stalk which helps the ribosome interact with GTP-bound translation factors.</text>
</comment>
<comment type="subunit">
    <text evidence="1">Part of the ribosomal stalk of the 50S ribosomal subunit. Interacts with L10 and the large rRNA to form the base of the stalk. L10 forms an elongated spine to which L12 dimers bind in a sequential fashion forming a multimeric L10(L12)X complex.</text>
</comment>
<comment type="PTM">
    <text evidence="1">One or more lysine residues are methylated.</text>
</comment>
<comment type="similarity">
    <text evidence="1">Belongs to the universal ribosomal protein uL11 family.</text>
</comment>
<feature type="chain" id="PRO_0000104235" description="Large ribosomal subunit protein uL11">
    <location>
        <begin position="1"/>
        <end position="141"/>
    </location>
</feature>
<evidence type="ECO:0000255" key="1">
    <source>
        <dbReference type="HAMAP-Rule" id="MF_00736"/>
    </source>
</evidence>
<evidence type="ECO:0000305" key="2"/>